<evidence type="ECO:0000255" key="1">
    <source>
        <dbReference type="HAMAP-Rule" id="MF_00022"/>
    </source>
</evidence>
<proteinExistence type="inferred from homology"/>
<name>SYE_NITEC</name>
<comment type="function">
    <text evidence="1">Catalyzes the attachment of glutamate to tRNA(Glu) in a two-step reaction: glutamate is first activated by ATP to form Glu-AMP and then transferred to the acceptor end of tRNA(Glu).</text>
</comment>
<comment type="catalytic activity">
    <reaction evidence="1">
        <text>tRNA(Glu) + L-glutamate + ATP = L-glutamyl-tRNA(Glu) + AMP + diphosphate</text>
        <dbReference type="Rhea" id="RHEA:23540"/>
        <dbReference type="Rhea" id="RHEA-COMP:9663"/>
        <dbReference type="Rhea" id="RHEA-COMP:9680"/>
        <dbReference type="ChEBI" id="CHEBI:29985"/>
        <dbReference type="ChEBI" id="CHEBI:30616"/>
        <dbReference type="ChEBI" id="CHEBI:33019"/>
        <dbReference type="ChEBI" id="CHEBI:78442"/>
        <dbReference type="ChEBI" id="CHEBI:78520"/>
        <dbReference type="ChEBI" id="CHEBI:456215"/>
        <dbReference type="EC" id="6.1.1.17"/>
    </reaction>
</comment>
<comment type="subunit">
    <text evidence="1">Monomer.</text>
</comment>
<comment type="subcellular location">
    <subcellularLocation>
        <location evidence="1">Cytoplasm</location>
    </subcellularLocation>
</comment>
<comment type="similarity">
    <text evidence="1">Belongs to the class-I aminoacyl-tRNA synthetase family. Glutamate--tRNA ligase type 1 subfamily.</text>
</comment>
<sequence>MVKTRFAPSPTGYLHIGGARTALFSWAFARKQGGKFILRIEDTDLERSTQQSVQAILDGMAWLGLDYDEGPYYQMQRLSRYQEVAELLLKQGLAYRCYASKEELDALREQQRLAGLKPRYDGRWRDSKQTPPAGVTPVVRFKTPREGYAVFDDLVKGRIAVANHELDDLVLMRSDGTPTYNFGVVLDDLDMGVTHVIRGDDHVNNTPRQINILKALGAIIPQYAHVPMILGADGERLSKRHGAVSVMHYRDQGYLPEALINYLARLGWSHGDEEIFSQEQLVEWFDLAAINRSPAKFNPEKLTWLNQHYLKIAEDARLMELVTPILLGRKYSLPGEENMFKIINLLKERVSTIEELADASAYFFQAVEPAEALRTQYFTVEIRPVLEYLIDRLAQIEWKREAIHQEIKQTVSSHKLKFPNLAMPLRVMVTGEAQTPAIDAVLELIGKEETLHRLRDQLDAFPQ</sequence>
<accession>Q0AIP6</accession>
<organism>
    <name type="scientific">Nitrosomonas eutropha (strain DSM 101675 / C91 / Nm57)</name>
    <dbReference type="NCBI Taxonomy" id="335283"/>
    <lineage>
        <taxon>Bacteria</taxon>
        <taxon>Pseudomonadati</taxon>
        <taxon>Pseudomonadota</taxon>
        <taxon>Betaproteobacteria</taxon>
        <taxon>Nitrosomonadales</taxon>
        <taxon>Nitrosomonadaceae</taxon>
        <taxon>Nitrosomonas</taxon>
    </lineage>
</organism>
<protein>
    <recommendedName>
        <fullName evidence="1">Glutamate--tRNA ligase</fullName>
        <ecNumber evidence="1">6.1.1.17</ecNumber>
    </recommendedName>
    <alternativeName>
        <fullName evidence="1">Glutamyl-tRNA synthetase</fullName>
        <shortName evidence="1">GluRS</shortName>
    </alternativeName>
</protein>
<feature type="chain" id="PRO_1000001927" description="Glutamate--tRNA ligase">
    <location>
        <begin position="1"/>
        <end position="463"/>
    </location>
</feature>
<feature type="short sequence motif" description="'HIGH' region" evidence="1">
    <location>
        <begin position="8"/>
        <end position="18"/>
    </location>
</feature>
<feature type="short sequence motif" description="'KMSKS' region" evidence="1">
    <location>
        <begin position="236"/>
        <end position="240"/>
    </location>
</feature>
<feature type="binding site" evidence="1">
    <location>
        <position position="239"/>
    </location>
    <ligand>
        <name>ATP</name>
        <dbReference type="ChEBI" id="CHEBI:30616"/>
    </ligand>
</feature>
<reference key="1">
    <citation type="journal article" date="2007" name="Environ. Microbiol.">
        <title>Whole-genome analysis of the ammonia-oxidizing bacterium, Nitrosomonas eutropha C91: implications for niche adaptation.</title>
        <authorList>
            <person name="Stein L.Y."/>
            <person name="Arp D.J."/>
            <person name="Berube P.M."/>
            <person name="Chain P.S."/>
            <person name="Hauser L."/>
            <person name="Jetten M.S."/>
            <person name="Klotz M.G."/>
            <person name="Larimer F.W."/>
            <person name="Norton J.M."/>
            <person name="Op den Camp H.J.M."/>
            <person name="Shin M."/>
            <person name="Wei X."/>
        </authorList>
    </citation>
    <scope>NUCLEOTIDE SEQUENCE [LARGE SCALE GENOMIC DNA]</scope>
    <source>
        <strain>DSM 101675 / C91 / Nm57</strain>
    </source>
</reference>
<gene>
    <name evidence="1" type="primary">gltX</name>
    <name type="ordered locus">Neut_0499</name>
</gene>
<keyword id="KW-0030">Aminoacyl-tRNA synthetase</keyword>
<keyword id="KW-0067">ATP-binding</keyword>
<keyword id="KW-0963">Cytoplasm</keyword>
<keyword id="KW-0436">Ligase</keyword>
<keyword id="KW-0547">Nucleotide-binding</keyword>
<keyword id="KW-0648">Protein biosynthesis</keyword>
<dbReference type="EC" id="6.1.1.17" evidence="1"/>
<dbReference type="EMBL" id="CP000450">
    <property type="protein sequence ID" value="ABI58775.1"/>
    <property type="molecule type" value="Genomic_DNA"/>
</dbReference>
<dbReference type="RefSeq" id="WP_011633617.1">
    <property type="nucleotide sequence ID" value="NC_008344.1"/>
</dbReference>
<dbReference type="SMR" id="Q0AIP6"/>
<dbReference type="STRING" id="335283.Neut_0499"/>
<dbReference type="KEGG" id="net:Neut_0499"/>
<dbReference type="eggNOG" id="COG0008">
    <property type="taxonomic scope" value="Bacteria"/>
</dbReference>
<dbReference type="HOGENOM" id="CLU_015768_6_0_4"/>
<dbReference type="OrthoDB" id="9807503at2"/>
<dbReference type="Proteomes" id="UP000001966">
    <property type="component" value="Chromosome"/>
</dbReference>
<dbReference type="GO" id="GO:0005829">
    <property type="term" value="C:cytosol"/>
    <property type="evidence" value="ECO:0007669"/>
    <property type="project" value="TreeGrafter"/>
</dbReference>
<dbReference type="GO" id="GO:0005524">
    <property type="term" value="F:ATP binding"/>
    <property type="evidence" value="ECO:0007669"/>
    <property type="project" value="UniProtKB-UniRule"/>
</dbReference>
<dbReference type="GO" id="GO:0004818">
    <property type="term" value="F:glutamate-tRNA ligase activity"/>
    <property type="evidence" value="ECO:0007669"/>
    <property type="project" value="UniProtKB-UniRule"/>
</dbReference>
<dbReference type="GO" id="GO:0000049">
    <property type="term" value="F:tRNA binding"/>
    <property type="evidence" value="ECO:0007669"/>
    <property type="project" value="InterPro"/>
</dbReference>
<dbReference type="GO" id="GO:0008270">
    <property type="term" value="F:zinc ion binding"/>
    <property type="evidence" value="ECO:0007669"/>
    <property type="project" value="InterPro"/>
</dbReference>
<dbReference type="GO" id="GO:0006424">
    <property type="term" value="P:glutamyl-tRNA aminoacylation"/>
    <property type="evidence" value="ECO:0007669"/>
    <property type="project" value="UniProtKB-UniRule"/>
</dbReference>
<dbReference type="CDD" id="cd00808">
    <property type="entry name" value="GluRS_core"/>
    <property type="match status" value="1"/>
</dbReference>
<dbReference type="FunFam" id="3.40.50.620:FF:000007">
    <property type="entry name" value="Glutamate--tRNA ligase"/>
    <property type="match status" value="1"/>
</dbReference>
<dbReference type="Gene3D" id="1.10.10.350">
    <property type="match status" value="1"/>
</dbReference>
<dbReference type="Gene3D" id="3.40.50.620">
    <property type="entry name" value="HUPs"/>
    <property type="match status" value="1"/>
</dbReference>
<dbReference type="HAMAP" id="MF_00022">
    <property type="entry name" value="Glu_tRNA_synth_type1"/>
    <property type="match status" value="1"/>
</dbReference>
<dbReference type="InterPro" id="IPR045462">
    <property type="entry name" value="aa-tRNA-synth_I_cd-bd"/>
</dbReference>
<dbReference type="InterPro" id="IPR020751">
    <property type="entry name" value="aa-tRNA-synth_I_codon-bd_sub2"/>
</dbReference>
<dbReference type="InterPro" id="IPR001412">
    <property type="entry name" value="aa-tRNA-synth_I_CS"/>
</dbReference>
<dbReference type="InterPro" id="IPR008925">
    <property type="entry name" value="aa_tRNA-synth_I_cd-bd_sf"/>
</dbReference>
<dbReference type="InterPro" id="IPR004527">
    <property type="entry name" value="Glu-tRNA-ligase_bac/mito"/>
</dbReference>
<dbReference type="InterPro" id="IPR000924">
    <property type="entry name" value="Glu/Gln-tRNA-synth"/>
</dbReference>
<dbReference type="InterPro" id="IPR020058">
    <property type="entry name" value="Glu/Gln-tRNA-synth_Ib_cat-dom"/>
</dbReference>
<dbReference type="InterPro" id="IPR049940">
    <property type="entry name" value="GluQ/Sye"/>
</dbReference>
<dbReference type="InterPro" id="IPR033910">
    <property type="entry name" value="GluRS_core"/>
</dbReference>
<dbReference type="InterPro" id="IPR014729">
    <property type="entry name" value="Rossmann-like_a/b/a_fold"/>
</dbReference>
<dbReference type="NCBIfam" id="TIGR00464">
    <property type="entry name" value="gltX_bact"/>
    <property type="match status" value="1"/>
</dbReference>
<dbReference type="PANTHER" id="PTHR43311">
    <property type="entry name" value="GLUTAMATE--TRNA LIGASE"/>
    <property type="match status" value="1"/>
</dbReference>
<dbReference type="PANTHER" id="PTHR43311:SF2">
    <property type="entry name" value="GLUTAMATE--TRNA LIGASE, MITOCHONDRIAL-RELATED"/>
    <property type="match status" value="1"/>
</dbReference>
<dbReference type="Pfam" id="PF19269">
    <property type="entry name" value="Anticodon_2"/>
    <property type="match status" value="1"/>
</dbReference>
<dbReference type="Pfam" id="PF00749">
    <property type="entry name" value="tRNA-synt_1c"/>
    <property type="match status" value="1"/>
</dbReference>
<dbReference type="PRINTS" id="PR00987">
    <property type="entry name" value="TRNASYNTHGLU"/>
</dbReference>
<dbReference type="SUPFAM" id="SSF48163">
    <property type="entry name" value="An anticodon-binding domain of class I aminoacyl-tRNA synthetases"/>
    <property type="match status" value="1"/>
</dbReference>
<dbReference type="SUPFAM" id="SSF52374">
    <property type="entry name" value="Nucleotidylyl transferase"/>
    <property type="match status" value="1"/>
</dbReference>
<dbReference type="PROSITE" id="PS00178">
    <property type="entry name" value="AA_TRNA_LIGASE_I"/>
    <property type="match status" value="1"/>
</dbReference>